<keyword id="KW-0004">4Fe-4S</keyword>
<keyword id="KW-1003">Cell membrane</keyword>
<keyword id="KW-0903">Direct protein sequencing</keyword>
<keyword id="KW-0249">Electron transport</keyword>
<keyword id="KW-0408">Iron</keyword>
<keyword id="KW-0411">Iron-sulfur</keyword>
<keyword id="KW-0472">Membrane</keyword>
<keyword id="KW-0479">Metal-binding</keyword>
<keyword id="KW-0500">Molybdenum</keyword>
<keyword id="KW-0534">Nitrate assimilation</keyword>
<keyword id="KW-0560">Oxidoreductase</keyword>
<keyword id="KW-1185">Reference proteome</keyword>
<keyword id="KW-0813">Transport</keyword>
<protein>
    <recommendedName>
        <fullName>Respiratory nitrate reductase 2 alpha chain</fullName>
        <ecNumber>1.7.5.1</ecNumber>
    </recommendedName>
</protein>
<comment type="function">
    <text>This is a second nitrate reductase enzyme which can substitute for the NRA enzyme and allows E.coli to use nitrate as an electron acceptor during anaerobic growth.</text>
</comment>
<comment type="function">
    <text>The alpha chain is the actual site of nitrate reduction.</text>
</comment>
<comment type="catalytic activity">
    <reaction>
        <text>nitrate + a quinol = a quinone + nitrite + H2O</text>
        <dbReference type="Rhea" id="RHEA:56144"/>
        <dbReference type="ChEBI" id="CHEBI:15377"/>
        <dbReference type="ChEBI" id="CHEBI:16301"/>
        <dbReference type="ChEBI" id="CHEBI:17632"/>
        <dbReference type="ChEBI" id="CHEBI:24646"/>
        <dbReference type="ChEBI" id="CHEBI:132124"/>
        <dbReference type="EC" id="1.7.5.1"/>
    </reaction>
</comment>
<comment type="cofactor">
    <cofactor evidence="1">
        <name>[4Fe-4S] cluster</name>
        <dbReference type="ChEBI" id="CHEBI:49883"/>
    </cofactor>
    <text evidence="1">Binds 1 [4Fe-4S] cluster per subunit.</text>
</comment>
<comment type="cofactor">
    <cofactor evidence="1">
        <name>Mo-bis(molybdopterin guanine dinucleotide)</name>
        <dbReference type="ChEBI" id="CHEBI:60539"/>
    </cofactor>
    <text evidence="1">Binds 1 molybdenum-bis(molybdopterin guanine dinucleotide) (Mo-bis-MGD) cofactor per subunit.</text>
</comment>
<comment type="subunit">
    <text>Tetramer composed of an alpha, a beta and 2 gamma chains. Alpha and beta are catalytic chains; gamma chain is involved in binding the enzyme complex to the cytoplasmic membrane.</text>
</comment>
<comment type="interaction">
    <interactant intactId="EBI-547262">
        <id>P19319</id>
    </interactant>
    <interactant intactId="EBI-555067">
        <id>P11349</id>
        <label>narH</label>
    </interactant>
    <organismsDiffer>false</organismsDiffer>
    <experiments>6</experiments>
</comment>
<comment type="interaction">
    <interactant intactId="EBI-547262">
        <id>P19319</id>
    </interactant>
    <interactant intactId="EBI-555043">
        <id>P0AF26</id>
        <label>narJ</label>
    </interactant>
    <organismsDiffer>false</organismsDiffer>
    <experiments>3</experiments>
</comment>
<comment type="interaction">
    <interactant intactId="EBI-547262">
        <id>P19319</id>
    </interactant>
    <interactant intactId="EBI-555088">
        <id>P19317</id>
        <label>narW</label>
    </interactant>
    <organismsDiffer>false</organismsDiffer>
    <experiments>3</experiments>
</comment>
<comment type="subcellular location">
    <subcellularLocation>
        <location>Cell membrane</location>
        <topology>Peripheral membrane protein</topology>
    </subcellularLocation>
</comment>
<comment type="similarity">
    <text evidence="3">Belongs to the prokaryotic molybdopterin-containing oxidoreductase family.</text>
</comment>
<sequence>MSKLLDRFRYFKQKGETFADGHGQVMHSNRDWEDSYRQRWQFDKIVRSTHGVNCTGSCSWKIYVKNGLVTWEIQQTDYPRTRPDLPNHEPRGCPRGASYSWYLYSANRLKYPLIRKRLIELWREALKQHSDPVLAWASIMNDPQKCLSYKQVRGRGGFIRSNWQELNQLIAAANVWTIKTYGPDRVAGFSPIPAMSMVSYAAGTRYLSLLGGTCLSFYDWYCDLPPASPMTWGEQTDVPESADWYNSSYIIAWGSNVPQTRTPDAHFFTEVRYKGTKTIAITPDYSEVAKLCDQWLAPKQGTDSALAMAMGHVILKEFHLDNPSDYFINYCRRYSDMPMLVMLEPRDDGSYVPGRMIRASDLVDGLGESNNPQWKTVAVNTAGELVVPNGSIGFRWGEKGKWNLESIAAGTETELSLTLLGQHDAVAGVAFPYFGGIENPHFRSVKHNPVLVRQLPVKNLTLVDGNTCPVVSVYDLVLANYGLDRGLEDENSAKDYAEIKPYTPAWGEQITGVPRQYIETIAREFADTAHKTHGRSMIILGAGVNHWYHMDMNYRGMINMLIFCGCVGQSGGGWAHYVGQEKLRPQTGWLPLAFALDWNRPPRQMNSTSFFYNHSSQWRYEKVSAQELLSPLADASKYSGHLIDFNVRAERMGWLPSAPQLGRNPLGIKAEADKAGLSPTEFTAQALKSGDLRMACEQPDSSSNHPRNLFVWRSNLLGSSGKGHEYMQKYLLGTESGIQGEELGASDGIKPEEVEWQTAAIEGKLDLLVTLDFRMSSTCLFSDIVLPTATWYEKDDMNTSDMHPFIHPLSAAVDPAWESRSDWEIYKGIAKAFSQVCVGHLGKETDVVLQPLLHDSPAELSQPCEVLDWRKGECDLIPGKTAPNIVAVERDYPATYERFTSLGPLMDKLGNGGKGISWNTQDEIDFLGKLNYTKRDGPAQGRPLIDTAIDASEVILALAPETNGHVAVKAWQALGEITGREHTHLALHKEDEKIRFRDIQAQPRKIISSPTWSGLESDHVSYNAGYTNVHELIPWRTLSGRQQLYQDHPWMRAFGESLVAYRPPIDTRSVSEMRQIPPNGFPEKALNFLTPHQKWGIHSTYSENLLMLTLSRGGPIVWISETDARELTIVDNDWVEVFNANGALTARAVVSQRVPPGMTMMYHAQERIMNIPGSEVTGMRGGIHNSVTRVCPKPTHMIGGYAQLAWGFNYYGTVGSNRDEFIMIRKMKNVNWLDDEGRDQVQEAKK</sequence>
<reference key="1">
    <citation type="journal article" date="1990" name="Mol. Gen. Genet.">
        <title>Nitrate reductases of Escherichia coli: sequence of the second nitrate reductase and comparison with that encoded by the narGHJI operon.</title>
        <authorList>
            <person name="Blasco F."/>
            <person name="Iobbi C."/>
            <person name="Ratouchniak J."/>
            <person name="Bonnefoy V."/>
            <person name="Chippaux M."/>
        </authorList>
    </citation>
    <scope>NUCLEOTIDE SEQUENCE [GENOMIC DNA]</scope>
    <scope>PARTIAL PROTEIN SEQUENCE</scope>
</reference>
<reference key="2">
    <citation type="submission" date="1991-07" db="EMBL/GenBank/DDBJ databases">
        <authorList>
            <person name="Blasco F."/>
        </authorList>
    </citation>
    <scope>SEQUENCE REVISION</scope>
</reference>
<reference key="3">
    <citation type="journal article" date="1996" name="DNA Res.">
        <title>A 570-kb DNA sequence of the Escherichia coli K-12 genome corresponding to the 28.0-40.1 min region on the linkage map.</title>
        <authorList>
            <person name="Aiba H."/>
            <person name="Baba T."/>
            <person name="Fujita K."/>
            <person name="Hayashi K."/>
            <person name="Inada T."/>
            <person name="Isono K."/>
            <person name="Itoh T."/>
            <person name="Kasai H."/>
            <person name="Kashimoto K."/>
            <person name="Kimura S."/>
            <person name="Kitakawa M."/>
            <person name="Kitagawa M."/>
            <person name="Makino K."/>
            <person name="Miki T."/>
            <person name="Mizobuchi K."/>
            <person name="Mori H."/>
            <person name="Mori T."/>
            <person name="Motomura K."/>
            <person name="Nakade S."/>
            <person name="Nakamura Y."/>
            <person name="Nashimoto H."/>
            <person name="Nishio Y."/>
            <person name="Oshima T."/>
            <person name="Saito N."/>
            <person name="Sampei G."/>
            <person name="Seki Y."/>
            <person name="Sivasundaram S."/>
            <person name="Tagami H."/>
            <person name="Takeda J."/>
            <person name="Takemoto K."/>
            <person name="Takeuchi Y."/>
            <person name="Wada C."/>
            <person name="Yamamoto Y."/>
            <person name="Horiuchi T."/>
        </authorList>
    </citation>
    <scope>NUCLEOTIDE SEQUENCE [LARGE SCALE GENOMIC DNA]</scope>
    <source>
        <strain>K12 / W3110 / ATCC 27325 / DSM 5911</strain>
    </source>
</reference>
<reference key="4">
    <citation type="journal article" date="1997" name="Science">
        <title>The complete genome sequence of Escherichia coli K-12.</title>
        <authorList>
            <person name="Blattner F.R."/>
            <person name="Plunkett G. III"/>
            <person name="Bloch C.A."/>
            <person name="Perna N.T."/>
            <person name="Burland V."/>
            <person name="Riley M."/>
            <person name="Collado-Vides J."/>
            <person name="Glasner J.D."/>
            <person name="Rode C.K."/>
            <person name="Mayhew G.F."/>
            <person name="Gregor J."/>
            <person name="Davis N.W."/>
            <person name="Kirkpatrick H.A."/>
            <person name="Goeden M.A."/>
            <person name="Rose D.J."/>
            <person name="Mau B."/>
            <person name="Shao Y."/>
        </authorList>
    </citation>
    <scope>NUCLEOTIDE SEQUENCE [LARGE SCALE GENOMIC DNA]</scope>
    <source>
        <strain>K12 / MG1655 / ATCC 47076</strain>
    </source>
</reference>
<reference key="5">
    <citation type="journal article" date="2006" name="Mol. Syst. Biol.">
        <title>Highly accurate genome sequences of Escherichia coli K-12 strains MG1655 and W3110.</title>
        <authorList>
            <person name="Hayashi K."/>
            <person name="Morooka N."/>
            <person name="Yamamoto Y."/>
            <person name="Fujita K."/>
            <person name="Isono K."/>
            <person name="Choi S."/>
            <person name="Ohtsubo E."/>
            <person name="Baba T."/>
            <person name="Wanner B.L."/>
            <person name="Mori H."/>
            <person name="Horiuchi T."/>
        </authorList>
    </citation>
    <scope>NUCLEOTIDE SEQUENCE [LARGE SCALE GENOMIC DNA]</scope>
    <source>
        <strain>K12 / W3110 / ATCC 27325 / DSM 5911</strain>
    </source>
</reference>
<reference key="6">
    <citation type="submission" date="1996-01" db="EMBL/GenBank/DDBJ databases">
        <authorList>
            <person name="Bonnefoy V."/>
            <person name="Ratouchniak J."/>
            <person name="Blasco F."/>
            <person name="Chippaux M."/>
        </authorList>
    </citation>
    <scope>NUCLEOTIDE SEQUENCE [GENOMIC DNA] OF 1-23</scope>
    <source>
        <strain>K12</strain>
    </source>
</reference>
<organism>
    <name type="scientific">Escherichia coli (strain K12)</name>
    <dbReference type="NCBI Taxonomy" id="83333"/>
    <lineage>
        <taxon>Bacteria</taxon>
        <taxon>Pseudomonadati</taxon>
        <taxon>Pseudomonadota</taxon>
        <taxon>Gammaproteobacteria</taxon>
        <taxon>Enterobacterales</taxon>
        <taxon>Enterobacteriaceae</taxon>
        <taxon>Escherichia</taxon>
    </lineage>
</organism>
<feature type="initiator methionine" description="Removed" evidence="1">
    <location>
        <position position="1"/>
    </location>
</feature>
<feature type="chain" id="PRO_0000063234" description="Respiratory nitrate reductase 2 alpha chain">
    <location>
        <begin position="2"/>
        <end position="1246"/>
    </location>
</feature>
<feature type="domain" description="4Fe-4S Mo/W bis-MGD-type" evidence="2">
    <location>
        <begin position="43"/>
        <end position="107"/>
    </location>
</feature>
<feature type="binding site" evidence="2">
    <location>
        <position position="50"/>
    </location>
    <ligand>
        <name>[4Fe-4S] cluster</name>
        <dbReference type="ChEBI" id="CHEBI:49883"/>
    </ligand>
</feature>
<feature type="binding site" evidence="2">
    <location>
        <position position="54"/>
    </location>
    <ligand>
        <name>[4Fe-4S] cluster</name>
        <dbReference type="ChEBI" id="CHEBI:49883"/>
    </ligand>
</feature>
<feature type="binding site" evidence="2">
    <location>
        <position position="58"/>
    </location>
    <ligand>
        <name>[4Fe-4S] cluster</name>
        <dbReference type="ChEBI" id="CHEBI:49883"/>
    </ligand>
</feature>
<feature type="binding site" evidence="2">
    <location>
        <position position="93"/>
    </location>
    <ligand>
        <name>[4Fe-4S] cluster</name>
        <dbReference type="ChEBI" id="CHEBI:49883"/>
    </ligand>
</feature>
<feature type="binding site" evidence="1">
    <location>
        <position position="223"/>
    </location>
    <ligand>
        <name>Mo-bis(molybdopterin guanine dinucleotide)</name>
        <dbReference type="ChEBI" id="CHEBI:60539"/>
    </ligand>
    <ligandPart>
        <name>Mo</name>
        <dbReference type="ChEBI" id="CHEBI:28685"/>
    </ligandPart>
</feature>
<feature type="sequence conflict" description="In Ref. 1; CAA34964." evidence="3" ref="1">
    <original>E</original>
    <variation>D</variation>
    <location>
        <position position="1103"/>
    </location>
</feature>
<accession>P19319</accession>
<accession>P78063</accession>
<accession>P78154</accession>
<accession>P78155</accession>
<accession>P78156</accession>
<evidence type="ECO:0000250" key="1"/>
<evidence type="ECO:0000255" key="2">
    <source>
        <dbReference type="PROSITE-ProRule" id="PRU01004"/>
    </source>
</evidence>
<evidence type="ECO:0000305" key="3"/>
<proteinExistence type="evidence at protein level"/>
<name>NARZ_ECOLI</name>
<gene>
    <name type="primary">narZ</name>
    <name type="ordered locus">b1468</name>
    <name type="ordered locus">JW1463</name>
</gene>
<dbReference type="EC" id="1.7.5.1"/>
<dbReference type="EMBL" id="X17110">
    <property type="protein sequence ID" value="CAA34964.1"/>
    <property type="molecule type" value="Genomic_DNA"/>
</dbReference>
<dbReference type="EMBL" id="U00096">
    <property type="protein sequence ID" value="AAC74550.1"/>
    <property type="molecule type" value="Genomic_DNA"/>
</dbReference>
<dbReference type="EMBL" id="AP009048">
    <property type="protein sequence ID" value="BAA15105.2"/>
    <property type="molecule type" value="Genomic_DNA"/>
</dbReference>
<dbReference type="EMBL" id="X94992">
    <property type="protein sequence ID" value="CAA64449.1"/>
    <property type="molecule type" value="Genomic_DNA"/>
</dbReference>
<dbReference type="PIR" id="G64899">
    <property type="entry name" value="G64899"/>
</dbReference>
<dbReference type="RefSeq" id="NP_415985.1">
    <property type="nucleotide sequence ID" value="NC_000913.3"/>
</dbReference>
<dbReference type="RefSeq" id="WP_000040458.1">
    <property type="nucleotide sequence ID" value="NZ_STEB01000053.1"/>
</dbReference>
<dbReference type="SMR" id="P19319"/>
<dbReference type="BioGRID" id="4262897">
    <property type="interactions" value="67"/>
</dbReference>
<dbReference type="BioGRID" id="850360">
    <property type="interactions" value="3"/>
</dbReference>
<dbReference type="ComplexPortal" id="CPX-5581">
    <property type="entry name" value="Nitrate reductase Z complex"/>
</dbReference>
<dbReference type="DIP" id="DIP-10324N"/>
<dbReference type="FunCoup" id="P19319">
    <property type="interactions" value="381"/>
</dbReference>
<dbReference type="IntAct" id="P19319">
    <property type="interactions" value="29"/>
</dbReference>
<dbReference type="STRING" id="511145.b1468"/>
<dbReference type="TCDB" id="5.A.3.1.2">
    <property type="family name" value="the prokaryotic molybdopterin-containing oxidoreductase (pmo) family"/>
</dbReference>
<dbReference type="jPOST" id="P19319"/>
<dbReference type="PaxDb" id="511145-b1468"/>
<dbReference type="EnsemblBacteria" id="AAC74550">
    <property type="protein sequence ID" value="AAC74550"/>
    <property type="gene ID" value="b1468"/>
</dbReference>
<dbReference type="GeneID" id="945999"/>
<dbReference type="KEGG" id="ecj:JW1463"/>
<dbReference type="KEGG" id="eco:b1468"/>
<dbReference type="KEGG" id="ecoc:C3026_08520"/>
<dbReference type="PATRIC" id="fig|511145.12.peg.1534"/>
<dbReference type="EchoBASE" id="EB0642"/>
<dbReference type="eggNOG" id="COG5013">
    <property type="taxonomic scope" value="Bacteria"/>
</dbReference>
<dbReference type="InParanoid" id="P19319"/>
<dbReference type="OMA" id="PFIHPFN"/>
<dbReference type="OrthoDB" id="9759518at2"/>
<dbReference type="PhylomeDB" id="P19319"/>
<dbReference type="BioCyc" id="EcoCyc:NARZ-MONOMER"/>
<dbReference type="BioCyc" id="MetaCyc:NARZ-MONOMER"/>
<dbReference type="PHI-base" id="PHI:10516"/>
<dbReference type="PRO" id="PR:P19319"/>
<dbReference type="Proteomes" id="UP000000625">
    <property type="component" value="Chromosome"/>
</dbReference>
<dbReference type="GO" id="GO:0016020">
    <property type="term" value="C:membrane"/>
    <property type="evidence" value="ECO:0000314"/>
    <property type="project" value="ComplexPortal"/>
</dbReference>
<dbReference type="GO" id="GO:0009325">
    <property type="term" value="C:nitrate reductase complex"/>
    <property type="evidence" value="ECO:0000314"/>
    <property type="project" value="EcoCyc"/>
</dbReference>
<dbReference type="GO" id="GO:0005886">
    <property type="term" value="C:plasma membrane"/>
    <property type="evidence" value="ECO:0007669"/>
    <property type="project" value="UniProtKB-SubCell"/>
</dbReference>
<dbReference type="GO" id="GO:0051539">
    <property type="term" value="F:4 iron, 4 sulfur cluster binding"/>
    <property type="evidence" value="ECO:0007669"/>
    <property type="project" value="UniProtKB-KW"/>
</dbReference>
<dbReference type="GO" id="GO:0046872">
    <property type="term" value="F:metal ion binding"/>
    <property type="evidence" value="ECO:0007669"/>
    <property type="project" value="UniProtKB-KW"/>
</dbReference>
<dbReference type="GO" id="GO:0043546">
    <property type="term" value="F:molybdopterin cofactor binding"/>
    <property type="evidence" value="ECO:0000255"/>
    <property type="project" value="EcoCyc"/>
</dbReference>
<dbReference type="GO" id="GO:0160182">
    <property type="term" value="F:nitrate reductase (quinone) activity"/>
    <property type="evidence" value="ECO:0007669"/>
    <property type="project" value="UniProtKB-EC"/>
</dbReference>
<dbReference type="GO" id="GO:0008940">
    <property type="term" value="F:nitrate reductase activity"/>
    <property type="evidence" value="ECO:0000314"/>
    <property type="project" value="EcoCyc"/>
</dbReference>
<dbReference type="GO" id="GO:0019645">
    <property type="term" value="P:anaerobic electron transport chain"/>
    <property type="evidence" value="ECO:0000314"/>
    <property type="project" value="EcoCyc"/>
</dbReference>
<dbReference type="GO" id="GO:0009061">
    <property type="term" value="P:anaerobic respiration"/>
    <property type="evidence" value="ECO:0000314"/>
    <property type="project" value="EcoCyc"/>
</dbReference>
<dbReference type="GO" id="GO:0042128">
    <property type="term" value="P:nitrate assimilation"/>
    <property type="evidence" value="ECO:0007669"/>
    <property type="project" value="UniProtKB-KW"/>
</dbReference>
<dbReference type="GO" id="GO:0042126">
    <property type="term" value="P:nitrate metabolic process"/>
    <property type="evidence" value="ECO:0000303"/>
    <property type="project" value="ComplexPortal"/>
</dbReference>
<dbReference type="CDD" id="cd02776">
    <property type="entry name" value="MopB_CT_Nitrate-R-NarG-like"/>
    <property type="match status" value="1"/>
</dbReference>
<dbReference type="CDD" id="cd02750">
    <property type="entry name" value="MopB_Nitrate-R-NarG-like"/>
    <property type="match status" value="1"/>
</dbReference>
<dbReference type="FunFam" id="3.40.50.12440:FF:000001">
    <property type="entry name" value="Nitrate reductase subunit alpha"/>
    <property type="match status" value="1"/>
</dbReference>
<dbReference type="FunFam" id="4.10.1200.10:FF:000001">
    <property type="entry name" value="Respiratory nitrate reductase subunit alpha"/>
    <property type="match status" value="1"/>
</dbReference>
<dbReference type="Gene3D" id="3.40.50.12440">
    <property type="match status" value="1"/>
</dbReference>
<dbReference type="Gene3D" id="4.10.1200.10">
    <property type="entry name" value="nitrate reductase tail"/>
    <property type="match status" value="1"/>
</dbReference>
<dbReference type="InterPro" id="IPR009010">
    <property type="entry name" value="Asp_de-COase-like_dom_sf"/>
</dbReference>
<dbReference type="InterPro" id="IPR037943">
    <property type="entry name" value="MopB_CT_Nitrate-R-NarG-like"/>
</dbReference>
<dbReference type="InterPro" id="IPR006657">
    <property type="entry name" value="MoPterin_dinucl-bd_dom"/>
</dbReference>
<dbReference type="InterPro" id="IPR006656">
    <property type="entry name" value="Mopterin_OxRdtase"/>
</dbReference>
<dbReference type="InterPro" id="IPR006963">
    <property type="entry name" value="Mopterin_OxRdtase_4Fe-4S_dom"/>
</dbReference>
<dbReference type="InterPro" id="IPR006655">
    <property type="entry name" value="Mopterin_OxRdtase_prok_CS"/>
</dbReference>
<dbReference type="InterPro" id="IPR027467">
    <property type="entry name" value="MopterinOxRdtase_cofactor_BS"/>
</dbReference>
<dbReference type="InterPro" id="IPR006468">
    <property type="entry name" value="NarG"/>
</dbReference>
<dbReference type="InterPro" id="IPR028189">
    <property type="entry name" value="Nitr_red_alph_N"/>
</dbReference>
<dbReference type="InterPro" id="IPR044906">
    <property type="entry name" value="Nitr_red_alph_N_sf"/>
</dbReference>
<dbReference type="InterPro" id="IPR050123">
    <property type="entry name" value="Prok_molybdopt-oxidoreductase"/>
</dbReference>
<dbReference type="NCBIfam" id="TIGR01580">
    <property type="entry name" value="narG"/>
    <property type="match status" value="1"/>
</dbReference>
<dbReference type="PANTHER" id="PTHR43105">
    <property type="entry name" value="RESPIRATORY NITRATE REDUCTASE"/>
    <property type="match status" value="1"/>
</dbReference>
<dbReference type="PANTHER" id="PTHR43105:SF2">
    <property type="entry name" value="RESPIRATORY NITRATE REDUCTASE 2 ALPHA CHAIN"/>
    <property type="match status" value="1"/>
</dbReference>
<dbReference type="Pfam" id="PF00384">
    <property type="entry name" value="Molybdopterin"/>
    <property type="match status" value="1"/>
</dbReference>
<dbReference type="Pfam" id="PF01568">
    <property type="entry name" value="Molydop_binding"/>
    <property type="match status" value="1"/>
</dbReference>
<dbReference type="Pfam" id="PF14710">
    <property type="entry name" value="Nitr_red_alph_N"/>
    <property type="match status" value="1"/>
</dbReference>
<dbReference type="SMART" id="SM00926">
    <property type="entry name" value="Molybdop_Fe4S4"/>
    <property type="match status" value="1"/>
</dbReference>
<dbReference type="SUPFAM" id="SSF50692">
    <property type="entry name" value="ADC-like"/>
    <property type="match status" value="1"/>
</dbReference>
<dbReference type="SUPFAM" id="SSF53706">
    <property type="entry name" value="Formate dehydrogenase/DMSO reductase, domains 1-3"/>
    <property type="match status" value="1"/>
</dbReference>
<dbReference type="PROSITE" id="PS51669">
    <property type="entry name" value="4FE4S_MOW_BIS_MGD"/>
    <property type="match status" value="1"/>
</dbReference>
<dbReference type="PROSITE" id="PS00551">
    <property type="entry name" value="MOLYBDOPTERIN_PROK_1"/>
    <property type="match status" value="1"/>
</dbReference>
<dbReference type="PROSITE" id="PS00490">
    <property type="entry name" value="MOLYBDOPTERIN_PROK_2"/>
    <property type="match status" value="1"/>
</dbReference>
<dbReference type="PROSITE" id="PS00932">
    <property type="entry name" value="MOLYBDOPTERIN_PROK_3"/>
    <property type="match status" value="1"/>
</dbReference>